<gene>
    <name evidence="17" type="primary">ATP6AP2</name>
    <name type="synonym">ATP6IP2</name>
    <name type="synonym">CAPER</name>
    <name type="synonym">ELDF10</name>
    <name type="ORF">HT028</name>
    <name type="ORF">MSTP009</name>
    <name type="ORF">PSEC0072</name>
</gene>
<accession>O75787</accession>
<accession>B7Z9I3</accession>
<accession>Q5QTQ7</accession>
<accession>Q6T7F5</accession>
<accession>Q8NBP3</accession>
<accession>Q8NG15</accession>
<accession>Q96FV6</accession>
<accession>Q96LB5</accession>
<accession>Q9H2P8</accession>
<accession>Q9UG89</accession>
<feature type="signal peptide" evidence="3">
    <location>
        <begin position="1"/>
        <end position="16"/>
    </location>
</feature>
<feature type="chain" id="PRO_0000022203" description="Renin receptor">
    <location>
        <begin position="17"/>
        <end position="350"/>
    </location>
</feature>
<feature type="chain" id="PRO_0000447864" description="Renin receptor N-terminal fragment" evidence="15">
    <location>
        <begin position="17"/>
        <end position="275"/>
    </location>
</feature>
<feature type="chain" id="PRO_0000447865" description="Renin receptor C-terminal fragment" evidence="15">
    <location>
        <begin position="278"/>
        <end position="350"/>
    </location>
</feature>
<feature type="topological domain" description="Extracellular" evidence="3">
    <location>
        <begin position="17"/>
        <end position="302"/>
    </location>
</feature>
<feature type="transmembrane region" description="Helical" evidence="3">
    <location>
        <begin position="303"/>
        <end position="323"/>
    </location>
</feature>
<feature type="topological domain" description="Cytoplasmic" evidence="3">
    <location>
        <begin position="324"/>
        <end position="350"/>
    </location>
</feature>
<feature type="short sequence motif" description="Mediates retrograde transport to the ER" evidence="8">
    <location>
        <begin position="346"/>
        <end position="350"/>
    </location>
</feature>
<feature type="site" description="Cleavage; by furin-like protease" evidence="16">
    <location>
        <begin position="275"/>
        <end position="276"/>
    </location>
</feature>
<feature type="site" description="Cleavage; by furin-like protease" evidence="16">
    <location>
        <begin position="277"/>
        <end position="278"/>
    </location>
</feature>
<feature type="splice variant" id="VSP_056910" description="In isoform 2." evidence="13">
    <location>
        <begin position="101"/>
        <end position="132"/>
    </location>
</feature>
<feature type="sequence variant" id="VAR_082052" description="In CDG2R; increases degradation rate via the ER-associated degradation pathway; loss of interaction with ATP6AP1; dbSNP:rs1057523485." evidence="8">
    <original>R</original>
    <variation>H</variation>
    <location>
        <position position="71"/>
    </location>
</feature>
<feature type="sequence variant" id="VAR_051313" description="In dbSNP:rs9014.">
    <original>P</original>
    <variation>A</variation>
    <location>
        <position position="90"/>
    </location>
</feature>
<feature type="sequence variant" id="VAR_082053" description="In CDG2R; impairs export from the ER and cleavage, increases N-glycosylation post-translational modification which targets the misfolded protein to degradation via the ER-associated degradation pathway, results in loss of interaction with ATP6AP1; dbSNP:rs1926621737." evidence="8">
    <original>L</original>
    <variation>S</variation>
    <location>
        <position position="98"/>
    </location>
</feature>
<feature type="sequence variant" id="VAR_051314" description="In dbSNP:rs35798522.">
    <original>A</original>
    <variation>P</variation>
    <location>
        <position position="290"/>
    </location>
</feature>
<feature type="mutagenesis site" description="Increases cleavage and stability enhancing localization to the Golgi; when associated with Q-348." evidence="8">
    <original>K</original>
    <variation>Q</variation>
    <location>
        <position position="346"/>
    </location>
</feature>
<feature type="mutagenesis site" description="Increases cleavage and stability and enhancing localization to the Golgi; when associated with Q-346." evidence="8">
    <original>R</original>
    <variation>Q</variation>
    <location>
        <position position="348"/>
    </location>
</feature>
<feature type="sequence conflict" description="In Ref. 2; AAK83467." evidence="15" ref="2">
    <original>G</original>
    <variation>W</variation>
    <location>
        <position position="138"/>
    </location>
</feature>
<feature type="sequence conflict" description="In Ref. 2; AAK83467." evidence="15" ref="2">
    <original>QL</original>
    <variation>HV</variation>
    <location>
        <begin position="153"/>
        <end position="154"/>
    </location>
</feature>
<feature type="sequence conflict" description="In Ref. 6; BAC11582." evidence="15" ref="6">
    <original>N</original>
    <variation>K</variation>
    <location>
        <position position="258"/>
    </location>
</feature>
<feature type="sequence conflict" description="In Ref. 4 and 10." evidence="15" ref="4 10">
    <original>Q</original>
    <variation>R</variation>
    <location>
        <position position="285"/>
    </location>
</feature>
<feature type="sequence conflict" description="In Ref. 8; AAH10395." evidence="15" ref="8">
    <location>
        <position position="287"/>
    </location>
</feature>
<feature type="helix" evidence="26">
    <location>
        <begin position="303"/>
        <end position="329"/>
    </location>
</feature>
<feature type="turn" evidence="25">
    <location>
        <begin position="334"/>
        <end position="337"/>
    </location>
</feature>
<feature type="helix" evidence="24">
    <location>
        <begin position="338"/>
        <end position="340"/>
    </location>
</feature>
<name>RENR_HUMAN</name>
<comment type="function">
    <text evidence="2 4 8 9 11">Multifunctional protein which functions as a renin, prorenin cellular receptor and is involved in the assembly of the lysosomal proton-transporting V-type ATPase (V-ATPase) and the acidification of the endo-lysosomal system (PubMed:12045255, PubMed:29127204, PubMed:30374053, PubMed:32276428). May mediate renin-dependent cellular responses by activating ERK1 and ERK2 (PubMed:12045255). By increasing the catalytic efficiency of renin in AGT/angiotensinogen conversion to angiotensin I, may also play a role in the renin-angiotensin system (RAS) (PubMed:12045255). Through its function in V-type ATPase (v-ATPase) assembly and acidification of the lysosome it regulates protein degradation and may control different signaling pathways important for proper brain development, synapse morphology and synaptic transmission (By similarity).</text>
</comment>
<comment type="subunit">
    <text evidence="4 8 9 12">Interacts with renin (PubMed:12045255). Accessory component of the multisubunit proton-transporting vacuolar (V)-ATPase protein pump (PubMed:33065002). Interacts (via N-terminus) with ATP6AP1 (via N-terminus) (PubMed:29127204, PubMed:33065002). Interacts with ATP6V0D1; ATP6V0D1 is a V-ATPase complex subunit and the interaction promotes V-ATPase complex assembly (PubMed:30374053, PubMed:33065002). Interacts with TMEM9; TMEM9 is a V-ATPase assembly regulator and the interaction induces the interaction with ATP6V0D1 (PubMed:30374053). Interacts with VMA21 (via N-terminus); VMA21 is a V-ATPase accessory component (PubMed:29127204).</text>
</comment>
<comment type="interaction">
    <interactant intactId="EBI-2512037">
        <id>O75787</id>
    </interactant>
    <interactant intactId="EBI-307924">
        <id>P21854</id>
        <label>CD72</label>
    </interactant>
    <organismsDiffer>false</organismsDiffer>
    <experiments>3</experiments>
</comment>
<comment type="interaction">
    <interactant intactId="EBI-2512037">
        <id>O75787</id>
    </interactant>
    <interactant intactId="EBI-3919611">
        <id>Q16617</id>
        <label>NKG7</label>
    </interactant>
    <organismsDiffer>false</organismsDiffer>
    <experiments>3</experiments>
</comment>
<comment type="interaction">
    <interactant intactId="EBI-2512037">
        <id>O75787</id>
    </interactant>
    <interactant intactId="EBI-6380741">
        <id>P42857</id>
        <label>NSG1</label>
    </interactant>
    <organismsDiffer>false</organismsDiffer>
    <experiments>3</experiments>
</comment>
<comment type="interaction">
    <interactant intactId="EBI-2512037">
        <id>O75787</id>
    </interactant>
    <interactant intactId="EBI-2845982">
        <id>Q01453</id>
        <label>PMP22</label>
    </interactant>
    <organismsDiffer>false</organismsDiffer>
    <experiments>3</experiments>
</comment>
<comment type="interaction">
    <interactant intactId="EBI-2512037">
        <id>O75787</id>
    </interactant>
    <interactant intactId="EBI-3906138">
        <id>P53801</id>
        <label>PTTG1IP</label>
    </interactant>
    <organismsDiffer>false</organismsDiffer>
    <experiments>3</experiments>
</comment>
<comment type="interaction">
    <interactant intactId="EBI-2512037">
        <id>O75787</id>
    </interactant>
    <interactant intactId="EBI-8652744">
        <id>Q96IW7</id>
        <label>SEC22A</label>
    </interactant>
    <organismsDiffer>false</organismsDiffer>
    <experiments>3</experiments>
</comment>
<comment type="interaction">
    <interactant intactId="EBI-2512037">
        <id>O75787</id>
    </interactant>
    <interactant intactId="EBI-6268651">
        <id>Q9NPL8</id>
        <label>TIMMDC1</label>
    </interactant>
    <organismsDiffer>false</organismsDiffer>
    <experiments>3</experiments>
</comment>
<comment type="interaction">
    <interactant intactId="EBI-2512037">
        <id>O75787</id>
    </interactant>
    <interactant intactId="EBI-12274070">
        <id>Q969S6</id>
        <label>TMEM203</label>
    </interactant>
    <organismsDiffer>false</organismsDiffer>
    <experiments>3</experiments>
</comment>
<comment type="interaction">
    <interactant intactId="EBI-2512037">
        <id>O75787</id>
    </interactant>
    <interactant intactId="EBI-12111910">
        <id>Q5BJF2</id>
        <label>TMEM97</label>
    </interactant>
    <organismsDiffer>false</organismsDiffer>
    <experiments>3</experiments>
</comment>
<comment type="interaction">
    <interactant intactId="EBI-2512037">
        <id>O75787</id>
    </interactant>
    <interactant intactId="EBI-10179682">
        <id>O00526</id>
        <label>UPK2</label>
    </interactant>
    <organismsDiffer>false</organismsDiffer>
    <experiments>3</experiments>
</comment>
<comment type="interaction">
    <interactant intactId="EBI-2512037">
        <id>O75787</id>
    </interactant>
    <interactant intactId="EBI-10191195">
        <id>O95183</id>
        <label>VAMP5</label>
    </interactant>
    <organismsDiffer>false</organismsDiffer>
    <experiments>3</experiments>
</comment>
<comment type="subcellular location">
    <subcellularLocation>
        <location evidence="8">Endoplasmic reticulum membrane</location>
        <topology evidence="15">Single-pass type I membrane protein</topology>
    </subcellularLocation>
    <subcellularLocation>
        <location evidence="8">Lysosome membrane</location>
        <topology evidence="15">Single-pass type I membrane protein</topology>
    </subcellularLocation>
    <subcellularLocation>
        <location evidence="2">Cytoplasmic vesicle</location>
        <location evidence="2">Autophagosome membrane</location>
        <topology evidence="15">Single-pass type I membrane protein</topology>
    </subcellularLocation>
    <subcellularLocation>
        <location evidence="2">Cell projection</location>
        <location evidence="2">Dendritic spine membrane</location>
        <topology evidence="15">Single-pass type I membrane protein</topology>
    </subcellularLocation>
    <subcellularLocation>
        <location evidence="2">Cell projection</location>
        <location evidence="2">Axon</location>
    </subcellularLocation>
    <subcellularLocation>
        <location evidence="2">Endosome membrane</location>
        <topology evidence="15">Single-pass type I membrane protein</topology>
    </subcellularLocation>
    <subcellularLocation>
        <location evidence="1">Cytoplasmic vesicle</location>
        <location evidence="1">Clathrin-coated vesicle membrane</location>
        <topology evidence="15">Single-pass type I membrane protein</topology>
    </subcellularLocation>
    <subcellularLocation>
        <location evidence="1">Cytoplasmic vesicle</location>
        <location evidence="1">Secretory vesicle</location>
        <location evidence="1">Synaptic vesicle membrane</location>
        <topology evidence="15">Single-pass type I membrane protein</topology>
    </subcellularLocation>
</comment>
<comment type="alternative products">
    <event type="alternative splicing"/>
    <isoform>
        <id>O75787-1</id>
        <name>1</name>
        <sequence type="displayed"/>
    </isoform>
    <isoform>
        <id>O75787-2</id>
        <name>2</name>
        <sequence type="described" ref="VSP_056910"/>
    </isoform>
</comment>
<comment type="tissue specificity">
    <text evidence="4 5">Expressed in brain, heart, placenta, liver, kidney and pancreas. Barely detectable in lung and skeletal muscles. In the kidney cortex it is restricted to the mesangium of glomeruli. In the coronary and kidney artery it is expressed in the subendothelium, associated to smooth muscles where it colocalizes with REN. Expressed in vascular structures and by syncytiotrophoblast cells in the mature fetal placenta.</text>
</comment>
<comment type="PTM">
    <text evidence="4">Phosphorylated.</text>
</comment>
<comment type="PTM">
    <text evidence="8">Proteolytically cleaved by a furin-like convertase in the trans-Golgi network to generate N- and C-terminal fragments.</text>
</comment>
<comment type="disease" evidence="5 10">
    <disease id="DI-00741">
        <name>Intellectual developmental disorder, X-linked, syndromic, Hedera type</name>
        <acronym>MRXSH</acronym>
        <description>A disorder characterized by significantly below average general intellectual functioning associated with impairments in adaptive behavior and manifested during the developmental period. MRXSH patients manifest mild to moderate intellectual disability associated with epilepsy, delays in motor milestones and speech acquisition in infancy.</description>
        <dbReference type="MIM" id="300423"/>
    </disease>
    <text>The disease is caused by variants affecting the gene represented in this entry.</text>
</comment>
<comment type="disease" evidence="6">
    <disease id="DI-03948">
        <name>Parkinsonism with spasticity, X-linked</name>
        <acronym>XPDS</acronym>
        <description>A syndrome characterized by parkinsonian features, such as cogwheel rigidity, resting tremor and bradykinesia, and variably penetrant spasticity.</description>
        <dbReference type="MIM" id="300911"/>
    </disease>
    <text>The disease is caused by variants affecting the gene represented in this entry.</text>
</comment>
<comment type="disease" evidence="8">
    <disease id="DI-05804">
        <name>Congenital disorder of glycosylation 2R</name>
        <acronym>CDG2R</acronym>
        <description>A form of congenital disorder of glycosylation, a genetically heterogeneous group of multisystem disorders caused by a defect in glycoprotein biosynthesis and characterized by under-glycosylated serum glycoproteins. Congenital disorders of glycosylation result in a wide variety of clinical features, such as defects in the nervous system development, psychomotor retardation, dysmorphic features, hypotonia, coagulation disorders, and immunodeficiency. The broad spectrum of features reflects the critical role of N-glycoproteins during embryonic development, differentiation, and maintenance of cell functions. CDG2R is an X-linked recessive disorder characterized by infantile onset of liver failure, recurrent infections due to hypogammaglobulinemia, and cutis laxa. Some patients may also have mild intellectual impairment and dysmorphic features.</description>
        <dbReference type="MIM" id="301045"/>
    </disease>
    <text>The disease is caused by variants affecting the gene represented in this entry.</text>
</comment>
<comment type="disease">
    <text evidence="7">Defects in ATP6AP2 may be involved in a glycosylation disorder with autophagic defects characterized by serum protein hypoglycosylation, immunodeficiency, liver disease, psychomotor impairment, and cutis laxa.</text>
</comment>
<comment type="sequence caution" evidence="15">
    <conflict type="erroneous initiation">
        <sequence resource="EMBL-CDS" id="AAH10395"/>
    </conflict>
    <text>Truncated N-terminus.</text>
</comment>
<comment type="sequence caution" evidence="15">
    <conflict type="frameshift">
        <sequence resource="EMBL-CDS" id="AAQ13511"/>
    </conflict>
    <text>Translation N-terminally extended.</text>
</comment>
<comment type="sequence caution" evidence="15">
    <conflict type="erroneous initiation">
        <sequence resource="EMBL-CDS" id="CAA76984"/>
    </conflict>
    <text>Truncated N-terminus.</text>
</comment>
<protein>
    <recommendedName>
        <fullName evidence="15">Renin receptor</fullName>
    </recommendedName>
    <alternativeName>
        <fullName>ATPase H(+)-transporting lysosomal accessory protein 2</fullName>
    </alternativeName>
    <alternativeName>
        <fullName>ATPase H(+)-transporting lysosomal-interacting protein 2</fullName>
    </alternativeName>
    <alternativeName>
        <fullName>ER-localized type I transmembrane adapter</fullName>
    </alternativeName>
    <alternativeName>
        <fullName>Embryonic liver differentiation factor 10</fullName>
    </alternativeName>
    <alternativeName>
        <fullName>N14F</fullName>
    </alternativeName>
    <alternativeName>
        <fullName>Renin/prorenin receptor</fullName>
    </alternativeName>
    <alternativeName>
        <fullName>Vacuolar ATP synthase membrane sector-associated protein M8-9</fullName>
        <shortName>ATP6M8-9</shortName>
        <shortName>V-ATPase M8.9 subunit</shortName>
    </alternativeName>
    <component>
        <recommendedName>
            <fullName evidence="14">Renin receptor N-terminal fragment</fullName>
        </recommendedName>
    </component>
    <component>
        <recommendedName>
            <fullName evidence="14">Renin receptor C-terminal fragment</fullName>
        </recommendedName>
    </component>
</protein>
<evidence type="ECO:0000250" key="1">
    <source>
        <dbReference type="UniProtKB" id="Q6AXS4"/>
    </source>
</evidence>
<evidence type="ECO:0000250" key="2">
    <source>
        <dbReference type="UniProtKB" id="Q9CYN9"/>
    </source>
</evidence>
<evidence type="ECO:0000255" key="3"/>
<evidence type="ECO:0000269" key="4">
    <source>
    </source>
</evidence>
<evidence type="ECO:0000269" key="5">
    <source>
    </source>
</evidence>
<evidence type="ECO:0000269" key="6">
    <source>
    </source>
</evidence>
<evidence type="ECO:0000269" key="7">
    <source>
    </source>
</evidence>
<evidence type="ECO:0000269" key="8">
    <source>
    </source>
</evidence>
<evidence type="ECO:0000269" key="9">
    <source>
    </source>
</evidence>
<evidence type="ECO:0000269" key="10">
    <source>
    </source>
</evidence>
<evidence type="ECO:0000269" key="11">
    <source>
    </source>
</evidence>
<evidence type="ECO:0000269" key="12">
    <source>
    </source>
</evidence>
<evidence type="ECO:0000303" key="13">
    <source>
    </source>
</evidence>
<evidence type="ECO:0000303" key="14">
    <source>
    </source>
</evidence>
<evidence type="ECO:0000305" key="15"/>
<evidence type="ECO:0000305" key="16">
    <source>
    </source>
</evidence>
<evidence type="ECO:0000312" key="17">
    <source>
        <dbReference type="HGNC" id="HGNC:18305"/>
    </source>
</evidence>
<evidence type="ECO:0007744" key="18">
    <source>
        <dbReference type="PDB" id="3LBS"/>
    </source>
</evidence>
<evidence type="ECO:0007744" key="19">
    <source>
        <dbReference type="PDB" id="3LC8"/>
    </source>
</evidence>
<evidence type="ECO:0007744" key="20">
    <source>
        <dbReference type="PDB" id="6WLW"/>
    </source>
</evidence>
<evidence type="ECO:0007744" key="21">
    <source>
        <dbReference type="PDB" id="6WM2"/>
    </source>
</evidence>
<evidence type="ECO:0007744" key="22">
    <source>
        <dbReference type="PDB" id="6WM3"/>
    </source>
</evidence>
<evidence type="ECO:0007744" key="23">
    <source>
        <dbReference type="PDB" id="6WM4"/>
    </source>
</evidence>
<evidence type="ECO:0007829" key="24">
    <source>
        <dbReference type="PDB" id="3LBS"/>
    </source>
</evidence>
<evidence type="ECO:0007829" key="25">
    <source>
        <dbReference type="PDB" id="3LC8"/>
    </source>
</evidence>
<evidence type="ECO:0007829" key="26">
    <source>
        <dbReference type="PDB" id="6WLW"/>
    </source>
</evidence>
<dbReference type="EMBL" id="AF291814">
    <property type="protein sequence ID" value="AAM47531.1"/>
    <property type="molecule type" value="mRNA"/>
</dbReference>
<dbReference type="EMBL" id="AY038990">
    <property type="protein sequence ID" value="AAK83467.1"/>
    <property type="molecule type" value="mRNA"/>
</dbReference>
<dbReference type="EMBL" id="AF109363">
    <property type="protein sequence ID" value="AAQ13511.1"/>
    <property type="status" value="ALT_FRAME"/>
    <property type="molecule type" value="mRNA"/>
</dbReference>
<dbReference type="EMBL" id="AF248966">
    <property type="protein sequence ID" value="AAG44564.1"/>
    <property type="molecule type" value="mRNA"/>
</dbReference>
<dbReference type="EMBL" id="AK315948">
    <property type="protein sequence ID" value="BAH14319.1"/>
    <property type="molecule type" value="mRNA"/>
</dbReference>
<dbReference type="EMBL" id="AK075382">
    <property type="protein sequence ID" value="BAC11582.1"/>
    <property type="molecule type" value="mRNA"/>
</dbReference>
<dbReference type="EMBL" id="AC092473">
    <property type="status" value="NOT_ANNOTATED_CDS"/>
    <property type="molecule type" value="Genomic_DNA"/>
</dbReference>
<dbReference type="EMBL" id="BC010395">
    <property type="protein sequence ID" value="AAH10395.1"/>
    <property type="status" value="ALT_INIT"/>
    <property type="molecule type" value="mRNA"/>
</dbReference>
<dbReference type="EMBL" id="BC084541">
    <property type="protein sequence ID" value="AAH84541.1"/>
    <property type="molecule type" value="mRNA"/>
</dbReference>
<dbReference type="EMBL" id="AY429341">
    <property type="protein sequence ID" value="AAR06910.1"/>
    <property type="molecule type" value="mRNA"/>
</dbReference>
<dbReference type="EMBL" id="AL049929">
    <property type="protein sequence ID" value="CAB43210.1"/>
    <property type="molecule type" value="mRNA"/>
</dbReference>
<dbReference type="EMBL" id="Y17975">
    <property type="protein sequence ID" value="CAA76984.1"/>
    <property type="status" value="ALT_INIT"/>
    <property type="molecule type" value="mRNA"/>
</dbReference>
<dbReference type="CCDS" id="CCDS14252.1">
    <molecule id="O75787-1"/>
</dbReference>
<dbReference type="PIR" id="T08667">
    <property type="entry name" value="T08667"/>
</dbReference>
<dbReference type="RefSeq" id="NP_005756.2">
    <molecule id="O75787-1"/>
    <property type="nucleotide sequence ID" value="NM_005765.2"/>
</dbReference>
<dbReference type="PDB" id="3LBS">
    <property type="method" value="X-ray"/>
    <property type="resolution" value="2.15 A"/>
    <property type="chains" value="A/B=333-350"/>
</dbReference>
<dbReference type="PDB" id="3LC8">
    <property type="method" value="X-ray"/>
    <property type="resolution" value="2.00 A"/>
    <property type="chains" value="A/B=333-350"/>
</dbReference>
<dbReference type="PDB" id="6WLW">
    <property type="method" value="EM"/>
    <property type="resolution" value="3.00 A"/>
    <property type="chains" value="V=1-350"/>
</dbReference>
<dbReference type="PDB" id="6WM2">
    <property type="method" value="EM"/>
    <property type="resolution" value="3.10 A"/>
    <property type="chains" value="V=1-350"/>
</dbReference>
<dbReference type="PDB" id="6WM3">
    <property type="method" value="EM"/>
    <property type="resolution" value="3.40 A"/>
    <property type="chains" value="V=1-350"/>
</dbReference>
<dbReference type="PDB" id="6WM4">
    <property type="method" value="EM"/>
    <property type="resolution" value="3.60 A"/>
    <property type="chains" value="V=1-350"/>
</dbReference>
<dbReference type="PDB" id="7U4T">
    <property type="method" value="EM"/>
    <property type="resolution" value="3.60 A"/>
    <property type="chains" value="V=1-350"/>
</dbReference>
<dbReference type="PDBsum" id="3LBS"/>
<dbReference type="PDBsum" id="3LC8"/>
<dbReference type="PDBsum" id="6WLW"/>
<dbReference type="PDBsum" id="6WM2"/>
<dbReference type="PDBsum" id="6WM3"/>
<dbReference type="PDBsum" id="6WM4"/>
<dbReference type="PDBsum" id="7U4T"/>
<dbReference type="EMDB" id="EMD-21844"/>
<dbReference type="EMDB" id="EMD-21847"/>
<dbReference type="EMDB" id="EMD-21848"/>
<dbReference type="EMDB" id="EMD-21849"/>
<dbReference type="EMDB" id="EMD-26334"/>
<dbReference type="SMR" id="O75787"/>
<dbReference type="BioGRID" id="115461">
    <property type="interactions" value="362"/>
</dbReference>
<dbReference type="ComplexPortal" id="CPX-2470">
    <property type="entry name" value="Vacuolar proton translocating ATPase complex, ATP6V0A1 variant"/>
</dbReference>
<dbReference type="ComplexPortal" id="CPX-6904">
    <property type="entry name" value="Vacuolar proton translocating ATPase complex, ATP6V0A2 variant"/>
</dbReference>
<dbReference type="ComplexPortal" id="CPX-6905">
    <property type="entry name" value="Vacuolar proton translocating ATPase complex, ATP6V0A3 variant"/>
</dbReference>
<dbReference type="ComplexPortal" id="CPX-6912">
    <property type="entry name" value="Vacuolar proton translocating ATPase complex, ATP6V0A4 variant"/>
</dbReference>
<dbReference type="CORUM" id="O75787"/>
<dbReference type="FunCoup" id="O75787">
    <property type="interactions" value="1050"/>
</dbReference>
<dbReference type="IntAct" id="O75787">
    <property type="interactions" value="229"/>
</dbReference>
<dbReference type="MINT" id="O75787"/>
<dbReference type="STRING" id="9606.ENSP00000490083"/>
<dbReference type="TCDB" id="8.A.80.1.1">
    <property type="family name" value="the (pro)renin receptor (prr) family"/>
</dbReference>
<dbReference type="iPTMnet" id="O75787"/>
<dbReference type="PhosphoSitePlus" id="O75787"/>
<dbReference type="BioMuta" id="ATP6AP2"/>
<dbReference type="jPOST" id="O75787"/>
<dbReference type="MassIVE" id="O75787"/>
<dbReference type="PaxDb" id="9606-ENSP00000367697"/>
<dbReference type="PeptideAtlas" id="O75787"/>
<dbReference type="ProteomicsDB" id="50195">
    <molecule id="O75787-1"/>
</dbReference>
<dbReference type="ProteomicsDB" id="7033"/>
<dbReference type="Pumba" id="O75787"/>
<dbReference type="TopDownProteomics" id="O75787-1">
    <molecule id="O75787-1"/>
</dbReference>
<dbReference type="Antibodypedia" id="556">
    <property type="antibodies" value="360 antibodies from 37 providers"/>
</dbReference>
<dbReference type="DNASU" id="10159"/>
<dbReference type="Ensembl" id="ENST00000636409.1">
    <molecule id="O75787-2"/>
    <property type="protein sequence ID" value="ENSP00000489819.1"/>
    <property type="gene ID" value="ENSG00000182220.15"/>
</dbReference>
<dbReference type="Ensembl" id="ENST00000636580.2">
    <molecule id="O75787-1"/>
    <property type="protein sequence ID" value="ENSP00000490083.1"/>
    <property type="gene ID" value="ENSG00000182220.15"/>
</dbReference>
<dbReference type="GeneID" id="10159"/>
<dbReference type="KEGG" id="hsa:10159"/>
<dbReference type="MANE-Select" id="ENST00000636580.2">
    <property type="protein sequence ID" value="ENSP00000490083.1"/>
    <property type="RefSeq nucleotide sequence ID" value="NM_005765.3"/>
    <property type="RefSeq protein sequence ID" value="NP_005756.2"/>
</dbReference>
<dbReference type="UCSC" id="uc004det.4">
    <molecule id="O75787-1"/>
    <property type="organism name" value="human"/>
</dbReference>
<dbReference type="AGR" id="HGNC:18305"/>
<dbReference type="CTD" id="10159"/>
<dbReference type="DisGeNET" id="10159"/>
<dbReference type="GeneCards" id="ATP6AP2"/>
<dbReference type="HGNC" id="HGNC:18305">
    <property type="gene designation" value="ATP6AP2"/>
</dbReference>
<dbReference type="HPA" id="ENSG00000182220">
    <property type="expression patterns" value="Tissue enriched (parathyroid)"/>
</dbReference>
<dbReference type="MalaCards" id="ATP6AP2"/>
<dbReference type="MIM" id="300423">
    <property type="type" value="phenotype"/>
</dbReference>
<dbReference type="MIM" id="300556">
    <property type="type" value="gene"/>
</dbReference>
<dbReference type="MIM" id="300911">
    <property type="type" value="phenotype"/>
</dbReference>
<dbReference type="MIM" id="301045">
    <property type="type" value="phenotype"/>
</dbReference>
<dbReference type="neXtProt" id="NX_O75787"/>
<dbReference type="OpenTargets" id="ENSG00000182220"/>
<dbReference type="Orphanet" id="93952">
    <property type="disease" value="X-linked intellectual disability, Hedera type"/>
</dbReference>
<dbReference type="Orphanet" id="363654">
    <property type="disease" value="X-linked parkinsonism-spasticity syndrome"/>
</dbReference>
<dbReference type="PharmGKB" id="PA25148"/>
<dbReference type="VEuPathDB" id="HostDB:ENSG00000182220"/>
<dbReference type="eggNOG" id="KOG4737">
    <property type="taxonomic scope" value="Eukaryota"/>
</dbReference>
<dbReference type="GeneTree" id="ENSGT00390000008856"/>
<dbReference type="HOGENOM" id="CLU_065819_0_0_1"/>
<dbReference type="InParanoid" id="O75787"/>
<dbReference type="OMA" id="QYAVIFN"/>
<dbReference type="OrthoDB" id="7866065at2759"/>
<dbReference type="PAN-GO" id="O75787">
    <property type="GO annotations" value="2 GO annotations based on evolutionary models"/>
</dbReference>
<dbReference type="PhylomeDB" id="O75787"/>
<dbReference type="TreeFam" id="TF106137"/>
<dbReference type="BioCyc" id="MetaCyc:MONOMER66-34369"/>
<dbReference type="PathwayCommons" id="O75787"/>
<dbReference type="Reactome" id="R-HSA-2022377">
    <property type="pathway name" value="Metabolism of Angiotensinogen to Angiotensins"/>
</dbReference>
<dbReference type="Reactome" id="R-HSA-6798695">
    <property type="pathway name" value="Neutrophil degranulation"/>
</dbReference>
<dbReference type="SignaLink" id="O75787"/>
<dbReference type="SIGNOR" id="O75787"/>
<dbReference type="BioGRID-ORCS" id="10159">
    <property type="hits" value="326 hits in 822 CRISPR screens"/>
</dbReference>
<dbReference type="ChiTaRS" id="ATP6AP2">
    <property type="organism name" value="human"/>
</dbReference>
<dbReference type="EvolutionaryTrace" id="O75787"/>
<dbReference type="GeneWiki" id="ATP6AP2"/>
<dbReference type="GenomeRNAi" id="10159"/>
<dbReference type="Pharos" id="O75787">
    <property type="development level" value="Tbio"/>
</dbReference>
<dbReference type="PRO" id="PR:O75787"/>
<dbReference type="Proteomes" id="UP000005640">
    <property type="component" value="Chromosome X"/>
</dbReference>
<dbReference type="RNAct" id="O75787">
    <property type="molecule type" value="protein"/>
</dbReference>
<dbReference type="Bgee" id="ENSG00000182220">
    <property type="expression patterns" value="Expressed in visceral pleura and 213 other cell types or tissues"/>
</dbReference>
<dbReference type="ExpressionAtlas" id="O75787">
    <property type="expression patterns" value="baseline and differential"/>
</dbReference>
<dbReference type="GO" id="GO:0000421">
    <property type="term" value="C:autophagosome membrane"/>
    <property type="evidence" value="ECO:0007669"/>
    <property type="project" value="UniProtKB-SubCell"/>
</dbReference>
<dbReference type="GO" id="GO:0030424">
    <property type="term" value="C:axon"/>
    <property type="evidence" value="ECO:0007669"/>
    <property type="project" value="UniProtKB-SubCell"/>
</dbReference>
<dbReference type="GO" id="GO:0030665">
    <property type="term" value="C:clathrin-coated vesicle membrane"/>
    <property type="evidence" value="ECO:0007669"/>
    <property type="project" value="UniProtKB-SubCell"/>
</dbReference>
<dbReference type="GO" id="GO:0032591">
    <property type="term" value="C:dendritic spine membrane"/>
    <property type="evidence" value="ECO:0007669"/>
    <property type="project" value="UniProtKB-SubCell"/>
</dbReference>
<dbReference type="GO" id="GO:0005789">
    <property type="term" value="C:endoplasmic reticulum membrane"/>
    <property type="evidence" value="ECO:0000314"/>
    <property type="project" value="UniProtKB"/>
</dbReference>
<dbReference type="GO" id="GO:0010008">
    <property type="term" value="C:endosome membrane"/>
    <property type="evidence" value="ECO:0000250"/>
    <property type="project" value="UniProtKB"/>
</dbReference>
<dbReference type="GO" id="GO:0009897">
    <property type="term" value="C:external side of plasma membrane"/>
    <property type="evidence" value="ECO:0000314"/>
    <property type="project" value="HGNC-UCL"/>
</dbReference>
<dbReference type="GO" id="GO:0070062">
    <property type="term" value="C:extracellular exosome"/>
    <property type="evidence" value="ECO:0007005"/>
    <property type="project" value="UniProtKB"/>
</dbReference>
<dbReference type="GO" id="GO:0101003">
    <property type="term" value="C:ficolin-1-rich granule membrane"/>
    <property type="evidence" value="ECO:0000304"/>
    <property type="project" value="Reactome"/>
</dbReference>
<dbReference type="GO" id="GO:0000139">
    <property type="term" value="C:Golgi membrane"/>
    <property type="evidence" value="ECO:0000303"/>
    <property type="project" value="ComplexPortal"/>
</dbReference>
<dbReference type="GO" id="GO:0005765">
    <property type="term" value="C:lysosomal membrane"/>
    <property type="evidence" value="ECO:0000250"/>
    <property type="project" value="UniProtKB"/>
</dbReference>
<dbReference type="GO" id="GO:0005764">
    <property type="term" value="C:lysosome"/>
    <property type="evidence" value="ECO:0000314"/>
    <property type="project" value="UniProtKB"/>
</dbReference>
<dbReference type="GO" id="GO:0016020">
    <property type="term" value="C:membrane"/>
    <property type="evidence" value="ECO:0000314"/>
    <property type="project" value="ComplexPortal"/>
</dbReference>
<dbReference type="GO" id="GO:0005886">
    <property type="term" value="C:plasma membrane"/>
    <property type="evidence" value="ECO:0000304"/>
    <property type="project" value="Reactome"/>
</dbReference>
<dbReference type="GO" id="GO:0045211">
    <property type="term" value="C:postsynaptic membrane"/>
    <property type="evidence" value="ECO:0007669"/>
    <property type="project" value="UniProtKB-KW"/>
</dbReference>
<dbReference type="GO" id="GO:0033176">
    <property type="term" value="C:proton-transporting V-type ATPase complex"/>
    <property type="evidence" value="ECO:0000303"/>
    <property type="project" value="ComplexPortal"/>
</dbReference>
<dbReference type="GO" id="GO:0030672">
    <property type="term" value="C:synaptic vesicle membrane"/>
    <property type="evidence" value="ECO:0007669"/>
    <property type="project" value="UniProtKB-SubCell"/>
</dbReference>
<dbReference type="GO" id="GO:0070821">
    <property type="term" value="C:tertiary granule membrane"/>
    <property type="evidence" value="ECO:0000304"/>
    <property type="project" value="Reactome"/>
</dbReference>
<dbReference type="GO" id="GO:0016471">
    <property type="term" value="C:vacuolar proton-transporting V-type ATPase complex"/>
    <property type="evidence" value="ECO:0000315"/>
    <property type="project" value="UniProtKB"/>
</dbReference>
<dbReference type="GO" id="GO:0000220">
    <property type="term" value="C:vacuolar proton-transporting V-type ATPase, V0 domain"/>
    <property type="evidence" value="ECO:0000250"/>
    <property type="project" value="UniProtKB"/>
</dbReference>
<dbReference type="GO" id="GO:0038023">
    <property type="term" value="F:signaling receptor activity"/>
    <property type="evidence" value="ECO:0007669"/>
    <property type="project" value="InterPro"/>
</dbReference>
<dbReference type="GO" id="GO:0002003">
    <property type="term" value="P:angiotensin maturation"/>
    <property type="evidence" value="ECO:0000314"/>
    <property type="project" value="HGNC-UCL"/>
</dbReference>
<dbReference type="GO" id="GO:0021626">
    <property type="term" value="P:central nervous system maturation"/>
    <property type="evidence" value="ECO:0000315"/>
    <property type="project" value="UniProtKB"/>
</dbReference>
<dbReference type="GO" id="GO:0048388">
    <property type="term" value="P:endosomal lumen acidification"/>
    <property type="evidence" value="ECO:0000303"/>
    <property type="project" value="ComplexPortal"/>
</dbReference>
<dbReference type="GO" id="GO:0048069">
    <property type="term" value="P:eye pigmentation"/>
    <property type="evidence" value="ECO:0000315"/>
    <property type="project" value="UniProtKB"/>
</dbReference>
<dbReference type="GO" id="GO:0061795">
    <property type="term" value="P:Golgi lumen acidification"/>
    <property type="evidence" value="ECO:0000303"/>
    <property type="project" value="ComplexPortal"/>
</dbReference>
<dbReference type="GO" id="GO:0060323">
    <property type="term" value="P:head morphogenesis"/>
    <property type="evidence" value="ECO:0000315"/>
    <property type="project" value="UniProtKB"/>
</dbReference>
<dbReference type="GO" id="GO:0051452">
    <property type="term" value="P:intracellular pH reduction"/>
    <property type="evidence" value="ECO:0000303"/>
    <property type="project" value="ComplexPortal"/>
</dbReference>
<dbReference type="GO" id="GO:0007042">
    <property type="term" value="P:lysosomal lumen acidification"/>
    <property type="evidence" value="ECO:0000315"/>
    <property type="project" value="UniProtKB"/>
</dbReference>
<dbReference type="GO" id="GO:0090263">
    <property type="term" value="P:positive regulation of canonical Wnt signaling pathway"/>
    <property type="evidence" value="ECO:0000315"/>
    <property type="project" value="UniProtKB"/>
</dbReference>
<dbReference type="GO" id="GO:0032914">
    <property type="term" value="P:positive regulation of transforming growth factor beta1 production"/>
    <property type="evidence" value="ECO:0000314"/>
    <property type="project" value="HGNC-UCL"/>
</dbReference>
<dbReference type="GO" id="GO:0030177">
    <property type="term" value="P:positive regulation of Wnt signaling pathway"/>
    <property type="evidence" value="ECO:0000315"/>
    <property type="project" value="UniProtKB"/>
</dbReference>
<dbReference type="GO" id="GO:1902600">
    <property type="term" value="P:proton transmembrane transport"/>
    <property type="evidence" value="ECO:0000303"/>
    <property type="project" value="ComplexPortal"/>
</dbReference>
<dbReference type="GO" id="GO:0043408">
    <property type="term" value="P:regulation of MAPK cascade"/>
    <property type="evidence" value="ECO:0000314"/>
    <property type="project" value="HGNC-UCL"/>
</dbReference>
<dbReference type="GO" id="GO:0021903">
    <property type="term" value="P:rostrocaudal neural tube patterning"/>
    <property type="evidence" value="ECO:0000315"/>
    <property type="project" value="UniProtKB"/>
</dbReference>
<dbReference type="GO" id="GO:0097401">
    <property type="term" value="P:synaptic vesicle lumen acidification"/>
    <property type="evidence" value="ECO:0007669"/>
    <property type="project" value="Ensembl"/>
</dbReference>
<dbReference type="GO" id="GO:0007035">
    <property type="term" value="P:vacuolar acidification"/>
    <property type="evidence" value="ECO:0000303"/>
    <property type="project" value="ComplexPortal"/>
</dbReference>
<dbReference type="InterPro" id="IPR056780">
    <property type="entry name" value="Renin_r_C"/>
</dbReference>
<dbReference type="InterPro" id="IPR012493">
    <property type="entry name" value="Renin_rcpt"/>
</dbReference>
<dbReference type="PANTHER" id="PTHR13351">
    <property type="entry name" value="RENIN RECEPTOR"/>
    <property type="match status" value="1"/>
</dbReference>
<dbReference type="PANTHER" id="PTHR13351:SF5">
    <property type="entry name" value="RENIN RECEPTOR"/>
    <property type="match status" value="1"/>
</dbReference>
<dbReference type="Pfam" id="PF07850">
    <property type="entry name" value="Renin_r"/>
    <property type="match status" value="1"/>
</dbReference>
<dbReference type="Pfam" id="PF25294">
    <property type="entry name" value="RENR_N"/>
    <property type="match status" value="1"/>
</dbReference>
<keyword id="KW-0002">3D-structure</keyword>
<keyword id="KW-0025">Alternative splicing</keyword>
<keyword id="KW-1003">Cell membrane</keyword>
<keyword id="KW-0966">Cell projection</keyword>
<keyword id="KW-0165">Cleavage on pair of basic residues</keyword>
<keyword id="KW-0900">Congenital disorder of glycosylation</keyword>
<keyword id="KW-0968">Cytoplasmic vesicle</keyword>
<keyword id="KW-0225">Disease variant</keyword>
<keyword id="KW-0256">Endoplasmic reticulum</keyword>
<keyword id="KW-0967">Endosome</keyword>
<keyword id="KW-0887">Epilepsy</keyword>
<keyword id="KW-0991">Intellectual disability</keyword>
<keyword id="KW-0458">Lysosome</keyword>
<keyword id="KW-0472">Membrane</keyword>
<keyword id="KW-0523">Neurodegeneration</keyword>
<keyword id="KW-0908">Parkinsonism</keyword>
<keyword id="KW-0597">Phosphoprotein</keyword>
<keyword id="KW-0628">Postsynaptic cell membrane</keyword>
<keyword id="KW-1267">Proteomics identification</keyword>
<keyword id="KW-0675">Receptor</keyword>
<keyword id="KW-1185">Reference proteome</keyword>
<keyword id="KW-0732">Signal</keyword>
<keyword id="KW-0770">Synapse</keyword>
<keyword id="KW-0812">Transmembrane</keyword>
<keyword id="KW-1133">Transmembrane helix</keyword>
<organism>
    <name type="scientific">Homo sapiens</name>
    <name type="common">Human</name>
    <dbReference type="NCBI Taxonomy" id="9606"/>
    <lineage>
        <taxon>Eukaryota</taxon>
        <taxon>Metazoa</taxon>
        <taxon>Chordata</taxon>
        <taxon>Craniata</taxon>
        <taxon>Vertebrata</taxon>
        <taxon>Euteleostomi</taxon>
        <taxon>Mammalia</taxon>
        <taxon>Eutheria</taxon>
        <taxon>Euarchontoglires</taxon>
        <taxon>Primates</taxon>
        <taxon>Haplorrhini</taxon>
        <taxon>Catarrhini</taxon>
        <taxon>Hominidae</taxon>
        <taxon>Homo</taxon>
    </lineage>
</organism>
<sequence>MAVFVVLLALVAGVLGNEFSILKSPGSVVFRNGNWPIPGERIPDVAALSMGFSVKEDLSWPGLAVGNLFHRPRATVMVMVKGVNKLALPPGSVISYPLENAVPFSLDSVANSIHSLFSEETPVVLQLAPSEERVYMVGKANSVFEDLSVTLRQLRNRLFQENSVLSSLPLNSLSRNNEVDLLFLSELQVLHDISSLLSRHKHLAKDHSPDLYSLELAGLDEIGKRYGEDSEQFRDASKILVDALQKFADDMYSLYGGNAVVELVTVKSFDTSLIRKTRTILEAKQAKNPASPYNLAYKYNFEYSVVFNMVLWIMIALALAVIITSYNIWNMDPGYDSIIYRMTNQKIRMD</sequence>
<reference key="1">
    <citation type="journal article" date="2002" name="J. Clin. Invest.">
        <title>Pivotal role of the renin/prorenin receptor in angiotensin II production and cellular responses to renin.</title>
        <authorList>
            <person name="Nguyen G."/>
            <person name="Delarue F."/>
            <person name="Burckle C."/>
            <person name="Bouzhir L."/>
            <person name="Giller T."/>
            <person name="Sraer J.-D."/>
        </authorList>
    </citation>
    <scope>NUCLEOTIDE SEQUENCE [MRNA] (ISOFORM 1)</scope>
    <scope>INTERACTION WITH REN</scope>
    <scope>PHOSPHORYLATION</scope>
    <scope>TISSUE SPECIFICITY</scope>
    <scope>FUNCTION</scope>
    <source>
        <tissue>Mesangial cell</tissue>
    </source>
</reference>
<reference key="2">
    <citation type="submission" date="2001-06" db="EMBL/GenBank/DDBJ databases">
        <title>Cell cycle-dependent subcellular localization of the protein tyrosine phosphatase PTPCAAX1 and its implication in cell cycle regulation.</title>
        <authorList>
            <person name="Wang J."/>
            <person name="Kirby C."/>
            <person name="Herbst R."/>
        </authorList>
    </citation>
    <scope>NUCLEOTIDE SEQUENCE [MRNA] (ISOFORM 1)</scope>
    <source>
        <tissue>Cervix carcinoma</tissue>
    </source>
</reference>
<reference key="3">
    <citation type="submission" date="1998-11" db="EMBL/GenBank/DDBJ databases">
        <authorList>
            <person name="Hui R.T."/>
            <person name="Liu Y.Q."/>
            <person name="Liu B."/>
            <person name="Zhao B."/>
            <person name="Meng X.M."/>
            <person name="Sheng H."/>
            <person name="Xu Y.Y."/>
            <person name="Wang X.Y."/>
            <person name="Ye J."/>
            <person name="Song L."/>
            <person name="Gao Y."/>
            <person name="Wei Y.J."/>
            <person name="Zhang C.L."/>
            <person name="Zhang J."/>
            <person name="Chai M.Q."/>
            <person name="Chen J.Z."/>
            <person name="Sun Y.H."/>
            <person name="Zhou X.L."/>
            <person name="Jiang Y.X."/>
            <person name="Zhao X.W."/>
            <person name="Liu S."/>
            <person name="Cao H.Q."/>
            <person name="Zhao Y."/>
            <person name="Liu D.Q."/>
            <person name="Ding J.F."/>
            <person name="Liu L.S."/>
            <person name="Gao R.L."/>
            <person name="Wu Q.Y."/>
            <person name="Qiang B.Q."/>
            <person name="Yuan J.G."/>
            <person name="Liew C.C."/>
            <person name="Zhao M.S."/>
        </authorList>
    </citation>
    <scope>NUCLEOTIDE SEQUENCE [LARGE SCALE MRNA] (ISOFORM 1)</scope>
    <source>
        <tissue>Aorta</tissue>
    </source>
</reference>
<reference key="4">
    <citation type="journal article" date="2000" name="Proc. Natl. Acad. Sci. U.S.A.">
        <title>Gene expression profiling in the human hypothalamus-pituitary-adrenal axis and full-length cDNA cloning.</title>
        <authorList>
            <person name="Hu R.-M."/>
            <person name="Han Z.-G."/>
            <person name="Song H.-D."/>
            <person name="Peng Y.-D."/>
            <person name="Huang Q.-H."/>
            <person name="Ren S.-X."/>
            <person name="Gu Y.-J."/>
            <person name="Huang C.-H."/>
            <person name="Li Y.-B."/>
            <person name="Jiang C.-L."/>
            <person name="Fu G."/>
            <person name="Zhang Q.-H."/>
            <person name="Gu B.-W."/>
            <person name="Dai M."/>
            <person name="Mao Y.-F."/>
            <person name="Gao G.-F."/>
            <person name="Rong R."/>
            <person name="Ye M."/>
            <person name="Zhou J."/>
            <person name="Xu S.-H."/>
            <person name="Gu J."/>
            <person name="Shi J.-X."/>
            <person name="Jin W.-R."/>
            <person name="Zhang C.-K."/>
            <person name="Wu T.-M."/>
            <person name="Huang G.-Y."/>
            <person name="Chen Z."/>
            <person name="Chen M.-D."/>
            <person name="Chen J.-L."/>
        </authorList>
    </citation>
    <scope>NUCLEOTIDE SEQUENCE [LARGE SCALE MRNA] (ISOFORM 1)</scope>
    <source>
        <tissue>Hypothalamus</tissue>
    </source>
</reference>
<reference key="5">
    <citation type="journal article" date="2004" name="Nat. Genet.">
        <title>Complete sequencing and characterization of 21,243 full-length human cDNAs.</title>
        <authorList>
            <person name="Ota T."/>
            <person name="Suzuki Y."/>
            <person name="Nishikawa T."/>
            <person name="Otsuki T."/>
            <person name="Sugiyama T."/>
            <person name="Irie R."/>
            <person name="Wakamatsu A."/>
            <person name="Hayashi K."/>
            <person name="Sato H."/>
            <person name="Nagai K."/>
            <person name="Kimura K."/>
            <person name="Makita H."/>
            <person name="Sekine M."/>
            <person name="Obayashi M."/>
            <person name="Nishi T."/>
            <person name="Shibahara T."/>
            <person name="Tanaka T."/>
            <person name="Ishii S."/>
            <person name="Yamamoto J."/>
            <person name="Saito K."/>
            <person name="Kawai Y."/>
            <person name="Isono Y."/>
            <person name="Nakamura Y."/>
            <person name="Nagahari K."/>
            <person name="Murakami K."/>
            <person name="Yasuda T."/>
            <person name="Iwayanagi T."/>
            <person name="Wagatsuma M."/>
            <person name="Shiratori A."/>
            <person name="Sudo H."/>
            <person name="Hosoiri T."/>
            <person name="Kaku Y."/>
            <person name="Kodaira H."/>
            <person name="Kondo H."/>
            <person name="Sugawara M."/>
            <person name="Takahashi M."/>
            <person name="Kanda K."/>
            <person name="Yokoi T."/>
            <person name="Furuya T."/>
            <person name="Kikkawa E."/>
            <person name="Omura Y."/>
            <person name="Abe K."/>
            <person name="Kamihara K."/>
            <person name="Katsuta N."/>
            <person name="Sato K."/>
            <person name="Tanikawa M."/>
            <person name="Yamazaki M."/>
            <person name="Ninomiya K."/>
            <person name="Ishibashi T."/>
            <person name="Yamashita H."/>
            <person name="Murakawa K."/>
            <person name="Fujimori K."/>
            <person name="Tanai H."/>
            <person name="Kimata M."/>
            <person name="Watanabe M."/>
            <person name="Hiraoka S."/>
            <person name="Chiba Y."/>
            <person name="Ishida S."/>
            <person name="Ono Y."/>
            <person name="Takiguchi S."/>
            <person name="Watanabe S."/>
            <person name="Yosida M."/>
            <person name="Hotuta T."/>
            <person name="Kusano J."/>
            <person name="Kanehori K."/>
            <person name="Takahashi-Fujii A."/>
            <person name="Hara H."/>
            <person name="Tanase T.-O."/>
            <person name="Nomura Y."/>
            <person name="Togiya S."/>
            <person name="Komai F."/>
            <person name="Hara R."/>
            <person name="Takeuchi K."/>
            <person name="Arita M."/>
            <person name="Imose N."/>
            <person name="Musashino K."/>
            <person name="Yuuki H."/>
            <person name="Oshima A."/>
            <person name="Sasaki N."/>
            <person name="Aotsuka S."/>
            <person name="Yoshikawa Y."/>
            <person name="Matsunawa H."/>
            <person name="Ichihara T."/>
            <person name="Shiohata N."/>
            <person name="Sano S."/>
            <person name="Moriya S."/>
            <person name="Momiyama H."/>
            <person name="Satoh N."/>
            <person name="Takami S."/>
            <person name="Terashima Y."/>
            <person name="Suzuki O."/>
            <person name="Nakagawa S."/>
            <person name="Senoh A."/>
            <person name="Mizoguchi H."/>
            <person name="Goto Y."/>
            <person name="Shimizu F."/>
            <person name="Wakebe H."/>
            <person name="Hishigaki H."/>
            <person name="Watanabe T."/>
            <person name="Sugiyama A."/>
            <person name="Takemoto M."/>
            <person name="Kawakami B."/>
            <person name="Yamazaki M."/>
            <person name="Watanabe K."/>
            <person name="Kumagai A."/>
            <person name="Itakura S."/>
            <person name="Fukuzumi Y."/>
            <person name="Fujimori Y."/>
            <person name="Komiyama M."/>
            <person name="Tashiro H."/>
            <person name="Tanigami A."/>
            <person name="Fujiwara T."/>
            <person name="Ono T."/>
            <person name="Yamada K."/>
            <person name="Fujii Y."/>
            <person name="Ozaki K."/>
            <person name="Hirao M."/>
            <person name="Ohmori Y."/>
            <person name="Kawabata A."/>
            <person name="Hikiji T."/>
            <person name="Kobatake N."/>
            <person name="Inagaki H."/>
            <person name="Ikema Y."/>
            <person name="Okamoto S."/>
            <person name="Okitani R."/>
            <person name="Kawakami T."/>
            <person name="Noguchi S."/>
            <person name="Itoh T."/>
            <person name="Shigeta K."/>
            <person name="Senba T."/>
            <person name="Matsumura K."/>
            <person name="Nakajima Y."/>
            <person name="Mizuno T."/>
            <person name="Morinaga M."/>
            <person name="Sasaki M."/>
            <person name="Togashi T."/>
            <person name="Oyama M."/>
            <person name="Hata H."/>
            <person name="Watanabe M."/>
            <person name="Komatsu T."/>
            <person name="Mizushima-Sugano J."/>
            <person name="Satoh T."/>
            <person name="Shirai Y."/>
            <person name="Takahashi Y."/>
            <person name="Nakagawa K."/>
            <person name="Okumura K."/>
            <person name="Nagase T."/>
            <person name="Nomura N."/>
            <person name="Kikuchi H."/>
            <person name="Masuho Y."/>
            <person name="Yamashita R."/>
            <person name="Nakai K."/>
            <person name="Yada T."/>
            <person name="Nakamura Y."/>
            <person name="Ohara O."/>
            <person name="Isogai T."/>
            <person name="Sugano S."/>
        </authorList>
    </citation>
    <scope>NUCLEOTIDE SEQUENCE [LARGE SCALE MRNA] (ISOFORM 2)</scope>
    <source>
        <tissue>Brain cortex</tissue>
    </source>
</reference>
<reference key="6">
    <citation type="journal article" date="2005" name="DNA Res.">
        <title>Signal sequence and keyword trap in silico for selection of full-length human cDNAs encoding secretion or membrane proteins from oligo-capped cDNA libraries.</title>
        <authorList>
            <person name="Otsuki T."/>
            <person name="Ota T."/>
            <person name="Nishikawa T."/>
            <person name="Hayashi K."/>
            <person name="Suzuki Y."/>
            <person name="Yamamoto J."/>
            <person name="Wakamatsu A."/>
            <person name="Kimura K."/>
            <person name="Sakamoto K."/>
            <person name="Hatano N."/>
            <person name="Kawai Y."/>
            <person name="Ishii S."/>
            <person name="Saito K."/>
            <person name="Kojima S."/>
            <person name="Sugiyama T."/>
            <person name="Ono T."/>
            <person name="Okano K."/>
            <person name="Yoshikawa Y."/>
            <person name="Aotsuka S."/>
            <person name="Sasaki N."/>
            <person name="Hattori A."/>
            <person name="Okumura K."/>
            <person name="Nagai K."/>
            <person name="Sugano S."/>
            <person name="Isogai T."/>
        </authorList>
    </citation>
    <scope>NUCLEOTIDE SEQUENCE [LARGE SCALE MRNA] (ISOFORM 1)</scope>
    <source>
        <tissue>Teratocarcinoma</tissue>
    </source>
</reference>
<reference key="7">
    <citation type="journal article" date="2005" name="Nature">
        <title>The DNA sequence of the human X chromosome.</title>
        <authorList>
            <person name="Ross M.T."/>
            <person name="Grafham D.V."/>
            <person name="Coffey A.J."/>
            <person name="Scherer S."/>
            <person name="McLay K."/>
            <person name="Muzny D."/>
            <person name="Platzer M."/>
            <person name="Howell G.R."/>
            <person name="Burrows C."/>
            <person name="Bird C.P."/>
            <person name="Frankish A."/>
            <person name="Lovell F.L."/>
            <person name="Howe K.L."/>
            <person name="Ashurst J.L."/>
            <person name="Fulton R.S."/>
            <person name="Sudbrak R."/>
            <person name="Wen G."/>
            <person name="Jones M.C."/>
            <person name="Hurles M.E."/>
            <person name="Andrews T.D."/>
            <person name="Scott C.E."/>
            <person name="Searle S."/>
            <person name="Ramser J."/>
            <person name="Whittaker A."/>
            <person name="Deadman R."/>
            <person name="Carter N.P."/>
            <person name="Hunt S.E."/>
            <person name="Chen R."/>
            <person name="Cree A."/>
            <person name="Gunaratne P."/>
            <person name="Havlak P."/>
            <person name="Hodgson A."/>
            <person name="Metzker M.L."/>
            <person name="Richards S."/>
            <person name="Scott G."/>
            <person name="Steffen D."/>
            <person name="Sodergren E."/>
            <person name="Wheeler D.A."/>
            <person name="Worley K.C."/>
            <person name="Ainscough R."/>
            <person name="Ambrose K.D."/>
            <person name="Ansari-Lari M.A."/>
            <person name="Aradhya S."/>
            <person name="Ashwell R.I."/>
            <person name="Babbage A.K."/>
            <person name="Bagguley C.L."/>
            <person name="Ballabio A."/>
            <person name="Banerjee R."/>
            <person name="Barker G.E."/>
            <person name="Barlow K.F."/>
            <person name="Barrett I.P."/>
            <person name="Bates K.N."/>
            <person name="Beare D.M."/>
            <person name="Beasley H."/>
            <person name="Beasley O."/>
            <person name="Beck A."/>
            <person name="Bethel G."/>
            <person name="Blechschmidt K."/>
            <person name="Brady N."/>
            <person name="Bray-Allen S."/>
            <person name="Bridgeman A.M."/>
            <person name="Brown A.J."/>
            <person name="Brown M.J."/>
            <person name="Bonnin D."/>
            <person name="Bruford E.A."/>
            <person name="Buhay C."/>
            <person name="Burch P."/>
            <person name="Burford D."/>
            <person name="Burgess J."/>
            <person name="Burrill W."/>
            <person name="Burton J."/>
            <person name="Bye J.M."/>
            <person name="Carder C."/>
            <person name="Carrel L."/>
            <person name="Chako J."/>
            <person name="Chapman J.C."/>
            <person name="Chavez D."/>
            <person name="Chen E."/>
            <person name="Chen G."/>
            <person name="Chen Y."/>
            <person name="Chen Z."/>
            <person name="Chinault C."/>
            <person name="Ciccodicola A."/>
            <person name="Clark S.Y."/>
            <person name="Clarke G."/>
            <person name="Clee C.M."/>
            <person name="Clegg S."/>
            <person name="Clerc-Blankenburg K."/>
            <person name="Clifford K."/>
            <person name="Cobley V."/>
            <person name="Cole C.G."/>
            <person name="Conquer J.S."/>
            <person name="Corby N."/>
            <person name="Connor R.E."/>
            <person name="David R."/>
            <person name="Davies J."/>
            <person name="Davis C."/>
            <person name="Davis J."/>
            <person name="Delgado O."/>
            <person name="Deshazo D."/>
            <person name="Dhami P."/>
            <person name="Ding Y."/>
            <person name="Dinh H."/>
            <person name="Dodsworth S."/>
            <person name="Draper H."/>
            <person name="Dugan-Rocha S."/>
            <person name="Dunham A."/>
            <person name="Dunn M."/>
            <person name="Durbin K.J."/>
            <person name="Dutta I."/>
            <person name="Eades T."/>
            <person name="Ellwood M."/>
            <person name="Emery-Cohen A."/>
            <person name="Errington H."/>
            <person name="Evans K.L."/>
            <person name="Faulkner L."/>
            <person name="Francis F."/>
            <person name="Frankland J."/>
            <person name="Fraser A.E."/>
            <person name="Galgoczy P."/>
            <person name="Gilbert J."/>
            <person name="Gill R."/>
            <person name="Gloeckner G."/>
            <person name="Gregory S.G."/>
            <person name="Gribble S."/>
            <person name="Griffiths C."/>
            <person name="Grocock R."/>
            <person name="Gu Y."/>
            <person name="Gwilliam R."/>
            <person name="Hamilton C."/>
            <person name="Hart E.A."/>
            <person name="Hawes A."/>
            <person name="Heath P.D."/>
            <person name="Heitmann K."/>
            <person name="Hennig S."/>
            <person name="Hernandez J."/>
            <person name="Hinzmann B."/>
            <person name="Ho S."/>
            <person name="Hoffs M."/>
            <person name="Howden P.J."/>
            <person name="Huckle E.J."/>
            <person name="Hume J."/>
            <person name="Hunt P.J."/>
            <person name="Hunt A.R."/>
            <person name="Isherwood J."/>
            <person name="Jacob L."/>
            <person name="Johnson D."/>
            <person name="Jones S."/>
            <person name="de Jong P.J."/>
            <person name="Joseph S.S."/>
            <person name="Keenan S."/>
            <person name="Kelly S."/>
            <person name="Kershaw J.K."/>
            <person name="Khan Z."/>
            <person name="Kioschis P."/>
            <person name="Klages S."/>
            <person name="Knights A.J."/>
            <person name="Kosiura A."/>
            <person name="Kovar-Smith C."/>
            <person name="Laird G.K."/>
            <person name="Langford C."/>
            <person name="Lawlor S."/>
            <person name="Leversha M."/>
            <person name="Lewis L."/>
            <person name="Liu W."/>
            <person name="Lloyd C."/>
            <person name="Lloyd D.M."/>
            <person name="Loulseged H."/>
            <person name="Loveland J.E."/>
            <person name="Lovell J.D."/>
            <person name="Lozado R."/>
            <person name="Lu J."/>
            <person name="Lyne R."/>
            <person name="Ma J."/>
            <person name="Maheshwari M."/>
            <person name="Matthews L.H."/>
            <person name="McDowall J."/>
            <person name="McLaren S."/>
            <person name="McMurray A."/>
            <person name="Meidl P."/>
            <person name="Meitinger T."/>
            <person name="Milne S."/>
            <person name="Miner G."/>
            <person name="Mistry S.L."/>
            <person name="Morgan M."/>
            <person name="Morris S."/>
            <person name="Mueller I."/>
            <person name="Mullikin J.C."/>
            <person name="Nguyen N."/>
            <person name="Nordsiek G."/>
            <person name="Nyakatura G."/>
            <person name="O'dell C.N."/>
            <person name="Okwuonu G."/>
            <person name="Palmer S."/>
            <person name="Pandian R."/>
            <person name="Parker D."/>
            <person name="Parrish J."/>
            <person name="Pasternak S."/>
            <person name="Patel D."/>
            <person name="Pearce A.V."/>
            <person name="Pearson D.M."/>
            <person name="Pelan S.E."/>
            <person name="Perez L."/>
            <person name="Porter K.M."/>
            <person name="Ramsey Y."/>
            <person name="Reichwald K."/>
            <person name="Rhodes S."/>
            <person name="Ridler K.A."/>
            <person name="Schlessinger D."/>
            <person name="Schueler M.G."/>
            <person name="Sehra H.K."/>
            <person name="Shaw-Smith C."/>
            <person name="Shen H."/>
            <person name="Sheridan E.M."/>
            <person name="Shownkeen R."/>
            <person name="Skuce C.D."/>
            <person name="Smith M.L."/>
            <person name="Sotheran E.C."/>
            <person name="Steingruber H.E."/>
            <person name="Steward C.A."/>
            <person name="Storey R."/>
            <person name="Swann R.M."/>
            <person name="Swarbreck D."/>
            <person name="Tabor P.E."/>
            <person name="Taudien S."/>
            <person name="Taylor T."/>
            <person name="Teague B."/>
            <person name="Thomas K."/>
            <person name="Thorpe A."/>
            <person name="Timms K."/>
            <person name="Tracey A."/>
            <person name="Trevanion S."/>
            <person name="Tromans A.C."/>
            <person name="d'Urso M."/>
            <person name="Verduzco D."/>
            <person name="Villasana D."/>
            <person name="Waldron L."/>
            <person name="Wall M."/>
            <person name="Wang Q."/>
            <person name="Warren J."/>
            <person name="Warry G.L."/>
            <person name="Wei X."/>
            <person name="West A."/>
            <person name="Whitehead S.L."/>
            <person name="Whiteley M.N."/>
            <person name="Wilkinson J.E."/>
            <person name="Willey D.L."/>
            <person name="Williams G."/>
            <person name="Williams L."/>
            <person name="Williamson A."/>
            <person name="Williamson H."/>
            <person name="Wilming L."/>
            <person name="Woodmansey R.L."/>
            <person name="Wray P.W."/>
            <person name="Yen J."/>
            <person name="Zhang J."/>
            <person name="Zhou J."/>
            <person name="Zoghbi H."/>
            <person name="Zorilla S."/>
            <person name="Buck D."/>
            <person name="Reinhardt R."/>
            <person name="Poustka A."/>
            <person name="Rosenthal A."/>
            <person name="Lehrach H."/>
            <person name="Meindl A."/>
            <person name="Minx P.J."/>
            <person name="Hillier L.W."/>
            <person name="Willard H.F."/>
            <person name="Wilson R.K."/>
            <person name="Waterston R.H."/>
            <person name="Rice C.M."/>
            <person name="Vaudin M."/>
            <person name="Coulson A."/>
            <person name="Nelson D.L."/>
            <person name="Weinstock G."/>
            <person name="Sulston J.E."/>
            <person name="Durbin R.M."/>
            <person name="Hubbard T."/>
            <person name="Gibbs R.A."/>
            <person name="Beck S."/>
            <person name="Rogers J."/>
            <person name="Bentley D.R."/>
        </authorList>
    </citation>
    <scope>NUCLEOTIDE SEQUENCE [LARGE SCALE GENOMIC DNA]</scope>
</reference>
<reference key="8">
    <citation type="journal article" date="2004" name="Genome Res.">
        <title>The status, quality, and expansion of the NIH full-length cDNA project: the Mammalian Gene Collection (MGC).</title>
        <authorList>
            <consortium name="The MGC Project Team"/>
        </authorList>
    </citation>
    <scope>NUCLEOTIDE SEQUENCE [LARGE SCALE MRNA] (ISOFORM 1)</scope>
    <source>
        <tissue>Brain</tissue>
        <tissue>Prostate</tissue>
    </source>
</reference>
<reference key="9">
    <citation type="submission" date="2003-10" db="EMBL/GenBank/DDBJ databases">
        <title>The cloning of a novel gene related with erythroid differentiation.</title>
        <authorList>
            <person name="Zhang S."/>
            <person name="Yan H."/>
            <person name="Yang F."/>
        </authorList>
    </citation>
    <scope>NUCLEOTIDE SEQUENCE [MRNA] OF 13-350 (ISOFORM 1)</scope>
    <source>
        <tissue>Liver</tissue>
    </source>
</reference>
<reference key="10">
    <citation type="journal article" date="2007" name="BMC Genomics">
        <title>The full-ORF clone resource of the German cDNA consortium.</title>
        <authorList>
            <person name="Bechtel S."/>
            <person name="Rosenfelder H."/>
            <person name="Duda A."/>
            <person name="Schmidt C.P."/>
            <person name="Ernst U."/>
            <person name="Wellenreuther R."/>
            <person name="Mehrle A."/>
            <person name="Schuster C."/>
            <person name="Bahr A."/>
            <person name="Bloecker H."/>
            <person name="Heubner D."/>
            <person name="Hoerlein A."/>
            <person name="Michel G."/>
            <person name="Wedler H."/>
            <person name="Koehrer K."/>
            <person name="Ottenwaelder B."/>
            <person name="Poustka A."/>
            <person name="Wiemann S."/>
            <person name="Schupp I."/>
        </authorList>
    </citation>
    <scope>NUCLEOTIDE SEQUENCE [LARGE SCALE MRNA] OF 21-350 (ISOFORM 1)</scope>
    <source>
        <tissue>Brain</tissue>
    </source>
</reference>
<reference key="11">
    <citation type="journal article" date="1998" name="J. Biol. Chem.">
        <title>Identification and characterization of a novel 9.2-kDa membrane sector-associated protein of vacuolar proton-ATPase from chromaffin granules.</title>
        <authorList>
            <person name="Ludwig J."/>
            <person name="Kerscher S."/>
            <person name="Brandt U."/>
            <person name="Pfeiffer K."/>
            <person name="Getlawi F."/>
            <person name="Apps D.K."/>
            <person name="Schaegger H."/>
        </authorList>
    </citation>
    <scope>NUCLEOTIDE SEQUENCE [MRNA] OF 188-350 (ISOFORM 1)</scope>
</reference>
<reference key="12">
    <citation type="journal article" date="2005" name="Hum. Mol. Genet.">
        <title>A unique exonic splice enhancer mutation in a family with X-linked mental retardation and epilepsy points to a novel role of the renin receptor.</title>
        <authorList>
            <person name="Ramser J."/>
            <person name="Abidi F.E."/>
            <person name="Burckle C.A."/>
            <person name="Lenski C."/>
            <person name="Toriello H."/>
            <person name="Wen G."/>
            <person name="Lubs H.A."/>
            <person name="Engert S."/>
            <person name="Stevenson R.E."/>
            <person name="Meindl A."/>
            <person name="Schwartz C.E."/>
            <person name="Nguyen G."/>
        </authorList>
    </citation>
    <scope>INVOLVEMENT IN MRXSH</scope>
    <scope>TISSUE SPECIFICITY</scope>
    <scope>ALTERNATIVE SPLICING</scope>
</reference>
<reference key="13">
    <citation type="journal article" date="2011" name="BMC Syst. Biol.">
        <title>Initial characterization of the human central proteome.</title>
        <authorList>
            <person name="Burkard T.R."/>
            <person name="Planyavsky M."/>
            <person name="Kaupe I."/>
            <person name="Breitwieser F.P."/>
            <person name="Buerckstuemmer T."/>
            <person name="Bennett K.L."/>
            <person name="Superti-Furga G."/>
            <person name="Colinge J."/>
        </authorList>
    </citation>
    <scope>IDENTIFICATION BY MASS SPECTROMETRY [LARGE SCALE ANALYSIS]</scope>
</reference>
<reference key="14">
    <citation type="journal article" date="2013" name="Hum. Mol. Genet.">
        <title>Altered splicing of ATP6AP2 causes X-linked parkinsonism with spasticity (XPDS).</title>
        <authorList>
            <person name="Korvatska O."/>
            <person name="Strand N.S."/>
            <person name="Berndt J.D."/>
            <person name="Strovas T."/>
            <person name="Chen D.H."/>
            <person name="Leverenz J.B."/>
            <person name="Kiianitsa K."/>
            <person name="Mata I.F."/>
            <person name="Karakoc E."/>
            <person name="Greenup J.L."/>
            <person name="Bonkowski E."/>
            <person name="Chuang J."/>
            <person name="Moon R.T."/>
            <person name="Eichler E.E."/>
            <person name="Nickerson D.A."/>
            <person name="Zabetian C.P."/>
            <person name="Kraemer B.C."/>
            <person name="Bird T.D."/>
            <person name="Raskind W.H."/>
        </authorList>
    </citation>
    <scope>INVOLVEMENT IN XPDS</scope>
</reference>
<reference key="15">
    <citation type="journal article" date="2015" name="Proteomics">
        <title>N-terminome analysis of the human mitochondrial proteome.</title>
        <authorList>
            <person name="Vaca Jacome A.S."/>
            <person name="Rabilloud T."/>
            <person name="Schaeffer-Reiss C."/>
            <person name="Rompais M."/>
            <person name="Ayoub D."/>
            <person name="Lane L."/>
            <person name="Bairoch A."/>
            <person name="Van Dorsselaer A."/>
            <person name="Carapito C."/>
        </authorList>
    </citation>
    <scope>IDENTIFICATION BY MASS SPECTROMETRY [LARGE SCALE ANALYSIS]</scope>
</reference>
<reference key="16">
    <citation type="journal article" date="2017" name="J. Exp. Med.">
        <title>Mutations in the X-linked ATP6AP2 cause a glycosylation disorder with autophagic defects.</title>
        <authorList>
            <person name="Rujano M.A."/>
            <person name="Cannata Serio M."/>
            <person name="Panasyuk G."/>
            <person name="Peanne R."/>
            <person name="Reunert J."/>
            <person name="Rymen D."/>
            <person name="Hauser V."/>
            <person name="Park J.H."/>
            <person name="Freisinger P."/>
            <person name="Souche E."/>
            <person name="Guida M.C."/>
            <person name="Maier E.M."/>
            <person name="Wada Y."/>
            <person name="Jaeger S."/>
            <person name="Krogan N.J."/>
            <person name="Kretz O."/>
            <person name="Nobre S."/>
            <person name="Garcia P."/>
            <person name="Quelhas D."/>
            <person name="Bird T.D."/>
            <person name="Raskind W.H."/>
            <person name="Schwake M."/>
            <person name="Duvet S."/>
            <person name="Foulquier F."/>
            <person name="Matthijs G."/>
            <person name="Marquardt T."/>
            <person name="Simons M."/>
        </authorList>
    </citation>
    <scope>FUNCTION</scope>
    <scope>INTERACTION WITH ATP6AP1 AND VMA21</scope>
    <scope>SUBCELLULAR LOCATION</scope>
    <scope>INVOLVEMENT IN CDG2R</scope>
    <scope>MOTIF</scope>
    <scope>CHARACTERIZATION OF VARIANTS CDG2R HIS-71 AND SER-98</scope>
    <scope>MUTAGENESIS OF LYS-346 AND ARG-348</scope>
</reference>
<reference key="17">
    <citation type="journal article" date="2018" name="Nat. Cell Biol.">
        <title>TMEM9 promotes intestinal tumorigenesis through vacuolar-ATPase-activated Wnt/beta-catenin signalling.</title>
        <authorList>
            <person name="Jung Y.S."/>
            <person name="Jun S."/>
            <person name="Kim M.J."/>
            <person name="Lee S.H."/>
            <person name="Suh H.N."/>
            <person name="Lien E.M."/>
            <person name="Jung H.Y."/>
            <person name="Lee S."/>
            <person name="Zhang J."/>
            <person name="Yang J.I."/>
            <person name="Ji H."/>
            <person name="Wu J.Y."/>
            <person name="Wang W."/>
            <person name="Miller R.K."/>
            <person name="Chen J."/>
            <person name="McCrea P.D."/>
            <person name="Kopetz S."/>
            <person name="Park J.I."/>
        </authorList>
    </citation>
    <scope>FUNCTION</scope>
    <scope>INTERACTION WITH TMEM9 AND ATP6V0D1</scope>
</reference>
<reference key="18">
    <citation type="journal article" date="2019" name="J. Clin. Invest.">
        <title>ATP6AP2 variant impairs CNS development and neuronal survival to cause fulminant neurodegeneration.</title>
        <authorList>
            <person name="Hirose T."/>
            <person name="Cabrera-Socorro A."/>
            <person name="Chitayat D."/>
            <person name="Lemonnier T."/>
            <person name="Feraud O."/>
            <person name="Cifuentes-Diaz C."/>
            <person name="Gervasi N."/>
            <person name="Mombereau C."/>
            <person name="Ghosh T."/>
            <person name="Stoica L."/>
            <person name="Bacha J.D.A."/>
            <person name="Yamada H."/>
            <person name="Lauterbach M.A."/>
            <person name="Guillon M."/>
            <person name="Kaneko K."/>
            <person name="Norris J.W."/>
            <person name="Siriwardena K."/>
            <person name="Blaser S."/>
            <person name="Teillon J."/>
            <person name="Mendoza-Londono R."/>
            <person name="Russeau M."/>
            <person name="Hadoux J."/>
            <person name="Ito S."/>
            <person name="Corvol P."/>
            <person name="Matheus M.G."/>
            <person name="Holden K.R."/>
            <person name="Takei K."/>
            <person name="Emiliani V."/>
            <person name="Bennaceur-Griscelli A."/>
            <person name="Schwartz C.E."/>
            <person name="Nguyen G."/>
            <person name="Groszer M."/>
        </authorList>
    </citation>
    <scope>INVOLVEMENT IN MRXSH</scope>
</reference>
<reference key="19">
    <citation type="journal article" date="2020" name="Viruses">
        <title>Interaction between PHB2 and Enterovirus A71 VP1 Induces Autophagy and Affects EV-A71 Infection.</title>
        <authorList>
            <person name="Su W."/>
            <person name="Huang S."/>
            <person name="Zhu H."/>
            <person name="Zhang B."/>
            <person name="Wu X."/>
        </authorList>
    </citation>
    <scope>FUNCTION</scope>
</reference>
<reference evidence="18 19" key="20">
    <citation type="journal article" date="2011" name="Biochem. Biophys. Res. Commun.">
        <title>Structural analysis of the intracellular domain of (pro)renin receptor fused to maltose-binding protein.</title>
        <authorList>
            <person name="Zhang Y."/>
            <person name="Gao X."/>
            <person name="Michael Garavito R."/>
        </authorList>
    </citation>
    <scope>X-RAY CRYSTALLOGRAPHY (2.00 ANGSTROMS) OF 333-350</scope>
</reference>
<reference evidence="20 21 22 23" key="21">
    <citation type="journal article" date="2020" name="Mol. Cell">
        <title>Structures of a Complete Human V-ATPase Reveal Mechanisms of Its Assembly.</title>
        <authorList>
            <person name="Wang L."/>
            <person name="Wu D."/>
            <person name="Robinson C.V."/>
            <person name="Wu H."/>
            <person name="Fu T.M."/>
        </authorList>
    </citation>
    <scope>STRUCTURE BY ELECTRON MICROSCOPY (3.00 ANGSTROMS) IN COMPLEX WITH THE V-ATPASE</scope>
</reference>
<proteinExistence type="evidence at protein level"/>